<name>KEFC_ECO55</name>
<dbReference type="EMBL" id="CU928145">
    <property type="protein sequence ID" value="CAU95934.1"/>
    <property type="molecule type" value="Genomic_DNA"/>
</dbReference>
<dbReference type="RefSeq" id="WP_000377194.1">
    <property type="nucleotide sequence ID" value="NC_011748.1"/>
</dbReference>
<dbReference type="SMR" id="B7L4H0"/>
<dbReference type="GeneID" id="75202135"/>
<dbReference type="KEGG" id="eck:EC55989_0047"/>
<dbReference type="HOGENOM" id="CLU_005126_9_3_6"/>
<dbReference type="Proteomes" id="UP000000746">
    <property type="component" value="Chromosome"/>
</dbReference>
<dbReference type="GO" id="GO:0005886">
    <property type="term" value="C:plasma membrane"/>
    <property type="evidence" value="ECO:0007669"/>
    <property type="project" value="UniProtKB-SubCell"/>
</dbReference>
<dbReference type="GO" id="GO:0019899">
    <property type="term" value="F:enzyme binding"/>
    <property type="evidence" value="ECO:0007669"/>
    <property type="project" value="InterPro"/>
</dbReference>
<dbReference type="GO" id="GO:0015503">
    <property type="term" value="F:glutathione-regulated potassium exporter activity"/>
    <property type="evidence" value="ECO:0007669"/>
    <property type="project" value="UniProtKB-UniRule"/>
</dbReference>
<dbReference type="GO" id="GO:0015643">
    <property type="term" value="F:toxic substance binding"/>
    <property type="evidence" value="ECO:0007669"/>
    <property type="project" value="InterPro"/>
</dbReference>
<dbReference type="GO" id="GO:1902600">
    <property type="term" value="P:proton transmembrane transport"/>
    <property type="evidence" value="ECO:0007669"/>
    <property type="project" value="InterPro"/>
</dbReference>
<dbReference type="GO" id="GO:0051595">
    <property type="term" value="P:response to methylglyoxal"/>
    <property type="evidence" value="ECO:0007669"/>
    <property type="project" value="InterPro"/>
</dbReference>
<dbReference type="FunFam" id="1.20.1530.20:FF:000001">
    <property type="entry name" value="Glutathione-regulated potassium-efflux system protein KefB"/>
    <property type="match status" value="1"/>
</dbReference>
<dbReference type="FunFam" id="3.40.50.720:FF:000036">
    <property type="entry name" value="Glutathione-regulated potassium-efflux system protein KefB"/>
    <property type="match status" value="1"/>
</dbReference>
<dbReference type="Gene3D" id="1.20.1530.20">
    <property type="match status" value="1"/>
</dbReference>
<dbReference type="Gene3D" id="3.40.50.720">
    <property type="entry name" value="NAD(P)-binding Rossmann-like Domain"/>
    <property type="match status" value="1"/>
</dbReference>
<dbReference type="HAMAP" id="MF_01413">
    <property type="entry name" value="K_H_efflux_KefC"/>
    <property type="match status" value="1"/>
</dbReference>
<dbReference type="InterPro" id="IPR006153">
    <property type="entry name" value="Cation/H_exchanger_TM"/>
</dbReference>
<dbReference type="InterPro" id="IPR004771">
    <property type="entry name" value="K/H_exchanger"/>
</dbReference>
<dbReference type="InterPro" id="IPR023941">
    <property type="entry name" value="K_H_efflux_KefC"/>
</dbReference>
<dbReference type="InterPro" id="IPR006036">
    <property type="entry name" value="K_uptake_TrkA"/>
</dbReference>
<dbReference type="InterPro" id="IPR038770">
    <property type="entry name" value="Na+/solute_symporter_sf"/>
</dbReference>
<dbReference type="InterPro" id="IPR036291">
    <property type="entry name" value="NAD(P)-bd_dom_sf"/>
</dbReference>
<dbReference type="InterPro" id="IPR003148">
    <property type="entry name" value="RCK_N"/>
</dbReference>
<dbReference type="NCBIfam" id="TIGR00932">
    <property type="entry name" value="2a37"/>
    <property type="match status" value="1"/>
</dbReference>
<dbReference type="NCBIfam" id="NF002924">
    <property type="entry name" value="PRK03562.1"/>
    <property type="match status" value="1"/>
</dbReference>
<dbReference type="PANTHER" id="PTHR46157:SF3">
    <property type="entry name" value="GLUTATHIONE-REGULATED POTASSIUM-EFFLUX SYSTEM PROTEIN KEFC"/>
    <property type="match status" value="1"/>
</dbReference>
<dbReference type="PANTHER" id="PTHR46157">
    <property type="entry name" value="K(+) EFFLUX ANTIPORTER 3, CHLOROPLASTIC"/>
    <property type="match status" value="1"/>
</dbReference>
<dbReference type="Pfam" id="PF00999">
    <property type="entry name" value="Na_H_Exchanger"/>
    <property type="match status" value="1"/>
</dbReference>
<dbReference type="Pfam" id="PF02254">
    <property type="entry name" value="TrkA_N"/>
    <property type="match status" value="1"/>
</dbReference>
<dbReference type="PRINTS" id="PR00335">
    <property type="entry name" value="KUPTAKETRKA"/>
</dbReference>
<dbReference type="SUPFAM" id="SSF51735">
    <property type="entry name" value="NAD(P)-binding Rossmann-fold domains"/>
    <property type="match status" value="1"/>
</dbReference>
<dbReference type="PROSITE" id="PS51201">
    <property type="entry name" value="RCK_N"/>
    <property type="match status" value="1"/>
</dbReference>
<proteinExistence type="inferred from homology"/>
<feature type="chain" id="PRO_1000184616" description="Glutathione-regulated potassium-efflux system protein KefC">
    <location>
        <begin position="1"/>
        <end position="620"/>
    </location>
</feature>
<feature type="transmembrane region" description="Helical" evidence="1">
    <location>
        <begin position="4"/>
        <end position="24"/>
    </location>
</feature>
<feature type="transmembrane region" description="Helical" evidence="1">
    <location>
        <begin position="26"/>
        <end position="46"/>
    </location>
</feature>
<feature type="transmembrane region" description="Helical" evidence="1">
    <location>
        <begin position="54"/>
        <end position="74"/>
    </location>
</feature>
<feature type="transmembrane region" description="Helical" evidence="1">
    <location>
        <begin position="90"/>
        <end position="110"/>
    </location>
</feature>
<feature type="transmembrane region" description="Helical" evidence="1">
    <location>
        <begin position="114"/>
        <end position="134"/>
    </location>
</feature>
<feature type="transmembrane region" description="Helical" evidence="1">
    <location>
        <begin position="149"/>
        <end position="169"/>
    </location>
</feature>
<feature type="transmembrane region" description="Helical" evidence="1">
    <location>
        <begin position="178"/>
        <end position="198"/>
    </location>
</feature>
<feature type="transmembrane region" description="Helical" evidence="1">
    <location>
        <begin position="218"/>
        <end position="238"/>
    </location>
</feature>
<feature type="transmembrane region" description="Helical" evidence="1">
    <location>
        <begin position="270"/>
        <end position="290"/>
    </location>
</feature>
<feature type="transmembrane region" description="Helical" evidence="1">
    <location>
        <begin position="294"/>
        <end position="314"/>
    </location>
</feature>
<feature type="transmembrane region" description="Helical" evidence="1">
    <location>
        <begin position="327"/>
        <end position="347"/>
    </location>
</feature>
<feature type="transmembrane region" description="Helical" evidence="1">
    <location>
        <begin position="359"/>
        <end position="379"/>
    </location>
</feature>
<feature type="domain" description="RCK N-terminal" evidence="2">
    <location>
        <begin position="399"/>
        <end position="518"/>
    </location>
</feature>
<feature type="region of interest" description="Disordered" evidence="3">
    <location>
        <begin position="597"/>
        <end position="620"/>
    </location>
</feature>
<sequence length="620" mass="67736">MDSHTLVQALIYLGSAALIVPIAVRLGLGSVLGYLIAGCIIGPWGLRLVTDAESILHFAEIGVVLMLFIIGLELDPQRLWKLRAAVFGGGALQMVICGGLLGLFCMLLGLRWQVAELIGMTLALSSTAIAMQAMNERNLMVTQMGRSAFAVLLFQDIAAIPLVAMIPLLATSSASTTMGAFALSALKVAGALVLVVLLGRYVTRPALRFVARSGLREVFSAVALFLVFGFGLLLEEVGLSMAMGAFLAGVLLASSEYRHALESDIEPFKGLLLGLFFIGVGMSIDFGTLLENPLRIVILLLGFLIIKIAMLWLIARPLQVPNKQRRWFAVLLGQGSEFAFVVFGAAQMANVLEPEWAKSLTLAVALSMAATPILLVILNRLEQSSTEEAREADEIDEEQPRVIIAGFGRFGQITGRLLLSSGVKMVVLDHDPDHIETLRKFGMKVFYGDATRMDLLESAGAAKAEVLINAIDDPQTNLQLTEMVKEHFPHLQIIARARDVDHYIRLRQAGVEKPERETFEGALKTGRLALESLGLGPYEARERADVFRRFNIQMVEEMAMVENDTKARAAVYKRTSAMLSEIITEDREHLSLIQRHGWQGTEEGKHTGNMADEPETKPSS</sequence>
<gene>
    <name evidence="1" type="primary">kefC</name>
    <name type="ordered locus">EC55989_0047</name>
</gene>
<organism>
    <name type="scientific">Escherichia coli (strain 55989 / EAEC)</name>
    <dbReference type="NCBI Taxonomy" id="585055"/>
    <lineage>
        <taxon>Bacteria</taxon>
        <taxon>Pseudomonadati</taxon>
        <taxon>Pseudomonadota</taxon>
        <taxon>Gammaproteobacteria</taxon>
        <taxon>Enterobacterales</taxon>
        <taxon>Enterobacteriaceae</taxon>
        <taxon>Escherichia</taxon>
    </lineage>
</organism>
<comment type="function">
    <text evidence="1">Pore-forming subunit of a potassium efflux system that confers protection against electrophiles. Catalyzes K(+)/H(+) antiport.</text>
</comment>
<comment type="subunit">
    <text evidence="1">Homodimer. Interacts with the regulatory subunit KefF.</text>
</comment>
<comment type="subcellular location">
    <subcellularLocation>
        <location evidence="1">Cell inner membrane</location>
        <topology evidence="1">Multi-pass membrane protein</topology>
    </subcellularLocation>
</comment>
<comment type="similarity">
    <text evidence="1">Belongs to the monovalent cation:proton antiporter 2 (CPA2) transporter (TC 2.A.37) family. KefC subfamily.</text>
</comment>
<accession>B7L4H0</accession>
<reference key="1">
    <citation type="journal article" date="2009" name="PLoS Genet.">
        <title>Organised genome dynamics in the Escherichia coli species results in highly diverse adaptive paths.</title>
        <authorList>
            <person name="Touchon M."/>
            <person name="Hoede C."/>
            <person name="Tenaillon O."/>
            <person name="Barbe V."/>
            <person name="Baeriswyl S."/>
            <person name="Bidet P."/>
            <person name="Bingen E."/>
            <person name="Bonacorsi S."/>
            <person name="Bouchier C."/>
            <person name="Bouvet O."/>
            <person name="Calteau A."/>
            <person name="Chiapello H."/>
            <person name="Clermont O."/>
            <person name="Cruveiller S."/>
            <person name="Danchin A."/>
            <person name="Diard M."/>
            <person name="Dossat C."/>
            <person name="Karoui M.E."/>
            <person name="Frapy E."/>
            <person name="Garry L."/>
            <person name="Ghigo J.M."/>
            <person name="Gilles A.M."/>
            <person name="Johnson J."/>
            <person name="Le Bouguenec C."/>
            <person name="Lescat M."/>
            <person name="Mangenot S."/>
            <person name="Martinez-Jehanne V."/>
            <person name="Matic I."/>
            <person name="Nassif X."/>
            <person name="Oztas S."/>
            <person name="Petit M.A."/>
            <person name="Pichon C."/>
            <person name="Rouy Z."/>
            <person name="Ruf C.S."/>
            <person name="Schneider D."/>
            <person name="Tourret J."/>
            <person name="Vacherie B."/>
            <person name="Vallenet D."/>
            <person name="Medigue C."/>
            <person name="Rocha E.P.C."/>
            <person name="Denamur E."/>
        </authorList>
    </citation>
    <scope>NUCLEOTIDE SEQUENCE [LARGE SCALE GENOMIC DNA]</scope>
    <source>
        <strain>55989 / EAEC</strain>
    </source>
</reference>
<keyword id="KW-0050">Antiport</keyword>
<keyword id="KW-0997">Cell inner membrane</keyword>
<keyword id="KW-1003">Cell membrane</keyword>
<keyword id="KW-0406">Ion transport</keyword>
<keyword id="KW-0472">Membrane</keyword>
<keyword id="KW-0630">Potassium</keyword>
<keyword id="KW-0633">Potassium transport</keyword>
<keyword id="KW-1185">Reference proteome</keyword>
<keyword id="KW-0812">Transmembrane</keyword>
<keyword id="KW-1133">Transmembrane helix</keyword>
<keyword id="KW-0813">Transport</keyword>
<protein>
    <recommendedName>
        <fullName evidence="1">Glutathione-regulated potassium-efflux system protein KefC</fullName>
    </recommendedName>
    <alternativeName>
        <fullName evidence="1">K(+)/H(+) antiporter</fullName>
    </alternativeName>
</protein>
<evidence type="ECO:0000255" key="1">
    <source>
        <dbReference type="HAMAP-Rule" id="MF_01413"/>
    </source>
</evidence>
<evidence type="ECO:0000255" key="2">
    <source>
        <dbReference type="PROSITE-ProRule" id="PRU00543"/>
    </source>
</evidence>
<evidence type="ECO:0000256" key="3">
    <source>
        <dbReference type="SAM" id="MobiDB-lite"/>
    </source>
</evidence>